<comment type="similarity">
    <text evidence="1">Belongs to the SfsA family.</text>
</comment>
<dbReference type="EMBL" id="CT573326">
    <property type="protein sequence ID" value="CAK17385.1"/>
    <property type="molecule type" value="Genomic_DNA"/>
</dbReference>
<dbReference type="RefSeq" id="WP_011535748.1">
    <property type="nucleotide sequence ID" value="NC_008027.1"/>
</dbReference>
<dbReference type="SMR" id="Q1I4Q1"/>
<dbReference type="STRING" id="384676.PSEEN4724"/>
<dbReference type="GeneID" id="32807691"/>
<dbReference type="KEGG" id="pen:PSEEN4724"/>
<dbReference type="eggNOG" id="COG1489">
    <property type="taxonomic scope" value="Bacteria"/>
</dbReference>
<dbReference type="HOGENOM" id="CLU_052299_2_0_6"/>
<dbReference type="OrthoDB" id="9802365at2"/>
<dbReference type="Proteomes" id="UP000000658">
    <property type="component" value="Chromosome"/>
</dbReference>
<dbReference type="GO" id="GO:0003677">
    <property type="term" value="F:DNA binding"/>
    <property type="evidence" value="ECO:0007669"/>
    <property type="project" value="InterPro"/>
</dbReference>
<dbReference type="CDD" id="cd22359">
    <property type="entry name" value="SfsA-like_bacterial"/>
    <property type="match status" value="1"/>
</dbReference>
<dbReference type="FunFam" id="2.40.50.580:FF:000001">
    <property type="entry name" value="Sugar fermentation stimulation protein A"/>
    <property type="match status" value="1"/>
</dbReference>
<dbReference type="FunFam" id="3.40.1350.60:FF:000001">
    <property type="entry name" value="Sugar fermentation stimulation protein A"/>
    <property type="match status" value="1"/>
</dbReference>
<dbReference type="Gene3D" id="2.40.50.580">
    <property type="match status" value="1"/>
</dbReference>
<dbReference type="Gene3D" id="3.40.1350.60">
    <property type="match status" value="1"/>
</dbReference>
<dbReference type="HAMAP" id="MF_00095">
    <property type="entry name" value="SfsA"/>
    <property type="match status" value="1"/>
</dbReference>
<dbReference type="InterPro" id="IPR005224">
    <property type="entry name" value="SfsA"/>
</dbReference>
<dbReference type="InterPro" id="IPR040452">
    <property type="entry name" value="SfsA_C"/>
</dbReference>
<dbReference type="InterPro" id="IPR041465">
    <property type="entry name" value="SfsA_N"/>
</dbReference>
<dbReference type="NCBIfam" id="TIGR00230">
    <property type="entry name" value="sfsA"/>
    <property type="match status" value="1"/>
</dbReference>
<dbReference type="PANTHER" id="PTHR30545">
    <property type="entry name" value="SUGAR FERMENTATION STIMULATION PROTEIN A"/>
    <property type="match status" value="1"/>
</dbReference>
<dbReference type="PANTHER" id="PTHR30545:SF2">
    <property type="entry name" value="SUGAR FERMENTATION STIMULATION PROTEIN A"/>
    <property type="match status" value="1"/>
</dbReference>
<dbReference type="Pfam" id="PF03749">
    <property type="entry name" value="SfsA"/>
    <property type="match status" value="1"/>
</dbReference>
<dbReference type="Pfam" id="PF17746">
    <property type="entry name" value="SfsA_N"/>
    <property type="match status" value="1"/>
</dbReference>
<protein>
    <recommendedName>
        <fullName evidence="1">Sugar fermentation stimulation protein homolog</fullName>
    </recommendedName>
</protein>
<evidence type="ECO:0000255" key="1">
    <source>
        <dbReference type="HAMAP-Rule" id="MF_00095"/>
    </source>
</evidence>
<sequence length="238" mass="26325">MVFFPELEQARLLRRYKRFLADIELANGEQLTIHCPNTGSMLNCMREGGQVWFSRSNDPKRKLPGTWEISETPQGRLACVNTGRANALVEEALRAGTILELAGFELLKREVAYGEERSRIDFYLEFADGRPAYVEVKSVTLGFPDTPVAAFPDAVTQRGAKHLRELAALARQGIRAVQLYCVNLTGIEAVRPAEEIDAAYAQALRAAVAEGVEVLAYGTRLDARGIVIDRPLPVLLNP</sequence>
<reference key="1">
    <citation type="journal article" date="2006" name="Nat. Biotechnol.">
        <title>Complete genome sequence of the entomopathogenic and metabolically versatile soil bacterium Pseudomonas entomophila.</title>
        <authorList>
            <person name="Vodovar N."/>
            <person name="Vallenet D."/>
            <person name="Cruveiller S."/>
            <person name="Rouy Z."/>
            <person name="Barbe V."/>
            <person name="Acosta C."/>
            <person name="Cattolico L."/>
            <person name="Jubin C."/>
            <person name="Lajus A."/>
            <person name="Segurens B."/>
            <person name="Vacherie B."/>
            <person name="Wincker P."/>
            <person name="Weissenbach J."/>
            <person name="Lemaitre B."/>
            <person name="Medigue C."/>
            <person name="Boccard F."/>
        </authorList>
    </citation>
    <scope>NUCLEOTIDE SEQUENCE [LARGE SCALE GENOMIC DNA]</scope>
    <source>
        <strain>L48</strain>
    </source>
</reference>
<gene>
    <name evidence="1" type="primary">sfsA</name>
    <name type="ordered locus">PSEEN4724</name>
</gene>
<organism>
    <name type="scientific">Pseudomonas entomophila (strain L48)</name>
    <dbReference type="NCBI Taxonomy" id="384676"/>
    <lineage>
        <taxon>Bacteria</taxon>
        <taxon>Pseudomonadati</taxon>
        <taxon>Pseudomonadota</taxon>
        <taxon>Gammaproteobacteria</taxon>
        <taxon>Pseudomonadales</taxon>
        <taxon>Pseudomonadaceae</taxon>
        <taxon>Pseudomonas</taxon>
    </lineage>
</organism>
<accession>Q1I4Q1</accession>
<name>SFSA_PSEE4</name>
<feature type="chain" id="PRO_1000008010" description="Sugar fermentation stimulation protein homolog">
    <location>
        <begin position="1"/>
        <end position="238"/>
    </location>
</feature>
<proteinExistence type="inferred from homology"/>